<gene>
    <name evidence="1" type="primary">glpG</name>
    <name type="ordered locus">plu0196</name>
</gene>
<accession>Q7N9W4</accession>
<name>GLPG_PHOLL</name>
<reference key="1">
    <citation type="journal article" date="2003" name="Nat. Biotechnol.">
        <title>The genome sequence of the entomopathogenic bacterium Photorhabdus luminescens.</title>
        <authorList>
            <person name="Duchaud E."/>
            <person name="Rusniok C."/>
            <person name="Frangeul L."/>
            <person name="Buchrieser C."/>
            <person name="Givaudan A."/>
            <person name="Taourit S."/>
            <person name="Bocs S."/>
            <person name="Boursaux-Eude C."/>
            <person name="Chandler M."/>
            <person name="Charles J.-F."/>
            <person name="Dassa E."/>
            <person name="Derose R."/>
            <person name="Derzelle S."/>
            <person name="Freyssinet G."/>
            <person name="Gaudriault S."/>
            <person name="Medigue C."/>
            <person name="Lanois A."/>
            <person name="Powell K."/>
            <person name="Siguier P."/>
            <person name="Vincent R."/>
            <person name="Wingate V."/>
            <person name="Zouine M."/>
            <person name="Glaser P."/>
            <person name="Boemare N."/>
            <person name="Danchin A."/>
            <person name="Kunst F."/>
        </authorList>
    </citation>
    <scope>NUCLEOTIDE SEQUENCE [LARGE SCALE GENOMIC DNA]</scope>
    <source>
        <strain>DSM 15139 / CIP 105565 / TT01</strain>
    </source>
</reference>
<keyword id="KW-0997">Cell inner membrane</keyword>
<keyword id="KW-1003">Cell membrane</keyword>
<keyword id="KW-0378">Hydrolase</keyword>
<keyword id="KW-0472">Membrane</keyword>
<keyword id="KW-0645">Protease</keyword>
<keyword id="KW-1185">Reference proteome</keyword>
<keyword id="KW-0720">Serine protease</keyword>
<keyword id="KW-0812">Transmembrane</keyword>
<keyword id="KW-1133">Transmembrane helix</keyword>
<proteinExistence type="inferred from homology"/>
<protein>
    <recommendedName>
        <fullName evidence="1">Rhomboid protease GlpG</fullName>
        <ecNumber evidence="1">3.4.21.105</ecNumber>
    </recommendedName>
    <alternativeName>
        <fullName evidence="1">Intramembrane serine protease</fullName>
    </alternativeName>
</protein>
<sequence length="282" mass="32543">MIRVIAISNPRLAQAFIDYMATHQVHLTMRPSHDGQHVELWLEDDTKLTLVQQELEQFTRDPLNERYQAASWQSGDVNHPLKYHNNLNWQYLSRQAGPLTLTILLLNIVVYLWMQFAGDYQVMSWLAWPNDSQHMELWRWVTHGLLHFSLLHIIFNLMWWWYLGGQTEKHLGTGKLFVIMIVSAVFSGWGQSLFSGSHFGGLSGVVYALIGYVWLTGERAPERGIGVPRGLMAFSLFWLIVGYFDAFGLSIANAAHFSGLIIGLLMALWDNRHTFKNNNRHF</sequence>
<organism>
    <name type="scientific">Photorhabdus laumondii subsp. laumondii (strain DSM 15139 / CIP 105565 / TT01)</name>
    <name type="common">Photorhabdus luminescens subsp. laumondii</name>
    <dbReference type="NCBI Taxonomy" id="243265"/>
    <lineage>
        <taxon>Bacteria</taxon>
        <taxon>Pseudomonadati</taxon>
        <taxon>Pseudomonadota</taxon>
        <taxon>Gammaproteobacteria</taxon>
        <taxon>Enterobacterales</taxon>
        <taxon>Morganellaceae</taxon>
        <taxon>Photorhabdus</taxon>
    </lineage>
</organism>
<feature type="chain" id="PRO_0000321687" description="Rhomboid protease GlpG">
    <location>
        <begin position="1"/>
        <end position="282"/>
    </location>
</feature>
<feature type="transmembrane region" description="Helical" evidence="1">
    <location>
        <begin position="96"/>
        <end position="116"/>
    </location>
</feature>
<feature type="transmembrane region" description="Helical" evidence="1">
    <location>
        <begin position="144"/>
        <end position="164"/>
    </location>
</feature>
<feature type="transmembrane region" description="Helical" evidence="1">
    <location>
        <begin position="176"/>
        <end position="196"/>
    </location>
</feature>
<feature type="transmembrane region" description="Helical" evidence="1">
    <location>
        <begin position="197"/>
        <end position="217"/>
    </location>
</feature>
<feature type="transmembrane region" description="Helical" evidence="1">
    <location>
        <begin position="225"/>
        <end position="242"/>
    </location>
</feature>
<feature type="transmembrane region" description="Helical" evidence="1">
    <location>
        <begin position="247"/>
        <end position="269"/>
    </location>
</feature>
<feature type="active site" description="Nucleophile" evidence="1">
    <location>
        <position position="203"/>
    </location>
</feature>
<feature type="active site" evidence="1">
    <location>
        <position position="256"/>
    </location>
</feature>
<dbReference type="EC" id="3.4.21.105" evidence="1"/>
<dbReference type="EMBL" id="BX571859">
    <property type="protein sequence ID" value="CAE12491.1"/>
    <property type="molecule type" value="Genomic_DNA"/>
</dbReference>
<dbReference type="RefSeq" id="WP_011144597.1">
    <property type="nucleotide sequence ID" value="NC_005126.1"/>
</dbReference>
<dbReference type="SMR" id="Q7N9W4"/>
<dbReference type="STRING" id="243265.plu0196"/>
<dbReference type="MEROPS" id="S54.016"/>
<dbReference type="GeneID" id="48846492"/>
<dbReference type="KEGG" id="plu:plu0196"/>
<dbReference type="eggNOG" id="COG0705">
    <property type="taxonomic scope" value="Bacteria"/>
</dbReference>
<dbReference type="HOGENOM" id="CLU_058989_0_0_6"/>
<dbReference type="OrthoDB" id="9778341at2"/>
<dbReference type="Proteomes" id="UP000002514">
    <property type="component" value="Chromosome"/>
</dbReference>
<dbReference type="GO" id="GO:0005886">
    <property type="term" value="C:plasma membrane"/>
    <property type="evidence" value="ECO:0007669"/>
    <property type="project" value="UniProtKB-SubCell"/>
</dbReference>
<dbReference type="GO" id="GO:0004252">
    <property type="term" value="F:serine-type endopeptidase activity"/>
    <property type="evidence" value="ECO:0007669"/>
    <property type="project" value="UniProtKB-UniRule"/>
</dbReference>
<dbReference type="GO" id="GO:0006508">
    <property type="term" value="P:proteolysis"/>
    <property type="evidence" value="ECO:0007669"/>
    <property type="project" value="UniProtKB-UniRule"/>
</dbReference>
<dbReference type="Gene3D" id="3.30.70.2350">
    <property type="match status" value="1"/>
</dbReference>
<dbReference type="Gene3D" id="1.20.1540.10">
    <property type="entry name" value="Rhomboid-like"/>
    <property type="match status" value="1"/>
</dbReference>
<dbReference type="HAMAP" id="MF_01594">
    <property type="entry name" value="Rhomboid_GlpG"/>
    <property type="match status" value="1"/>
</dbReference>
<dbReference type="InterPro" id="IPR038236">
    <property type="entry name" value="GlpG_N_sf"/>
</dbReference>
<dbReference type="InterPro" id="IPR022732">
    <property type="entry name" value="Peptidase_S54_GlpG_N"/>
</dbReference>
<dbReference type="InterPro" id="IPR022764">
    <property type="entry name" value="Peptidase_S54_rhomboid_dom"/>
</dbReference>
<dbReference type="InterPro" id="IPR035952">
    <property type="entry name" value="Rhomboid-like_sf"/>
</dbReference>
<dbReference type="InterPro" id="IPR023662">
    <property type="entry name" value="Rhomboid_protease_GlpG"/>
</dbReference>
<dbReference type="NCBIfam" id="NF008155">
    <property type="entry name" value="PRK10907.1"/>
    <property type="match status" value="1"/>
</dbReference>
<dbReference type="NCBIfam" id="TIGR04239">
    <property type="entry name" value="rhombo_GlpG"/>
    <property type="match status" value="1"/>
</dbReference>
<dbReference type="PANTHER" id="PTHR43066:SF26">
    <property type="entry name" value="RHOMBOID PROTEASE GLPG"/>
    <property type="match status" value="1"/>
</dbReference>
<dbReference type="PANTHER" id="PTHR43066">
    <property type="entry name" value="RHOMBOID-RELATED PROTEIN"/>
    <property type="match status" value="1"/>
</dbReference>
<dbReference type="Pfam" id="PF01694">
    <property type="entry name" value="Rhomboid"/>
    <property type="match status" value="1"/>
</dbReference>
<dbReference type="Pfam" id="PF12122">
    <property type="entry name" value="Rhomboid_N"/>
    <property type="match status" value="1"/>
</dbReference>
<dbReference type="SUPFAM" id="SSF144091">
    <property type="entry name" value="Rhomboid-like"/>
    <property type="match status" value="1"/>
</dbReference>
<comment type="function">
    <text evidence="1">Rhomboid-type serine protease that catalyzes intramembrane proteolysis.</text>
</comment>
<comment type="catalytic activity">
    <reaction evidence="1">
        <text>Cleaves type-1 transmembrane domains using a catalytic dyad composed of serine and histidine that are contributed by different transmembrane domains.</text>
        <dbReference type="EC" id="3.4.21.105"/>
    </reaction>
</comment>
<comment type="subcellular location">
    <subcellularLocation>
        <location evidence="1">Cell inner membrane</location>
        <topology evidence="1">Multi-pass membrane protein</topology>
    </subcellularLocation>
</comment>
<comment type="similarity">
    <text evidence="1">Belongs to the peptidase S54 family.</text>
</comment>
<evidence type="ECO:0000255" key="1">
    <source>
        <dbReference type="HAMAP-Rule" id="MF_01594"/>
    </source>
</evidence>